<dbReference type="EC" id="6.3.4.19" evidence="1"/>
<dbReference type="EMBL" id="CP001114">
    <property type="protein sequence ID" value="ACO45783.1"/>
    <property type="molecule type" value="Genomic_DNA"/>
</dbReference>
<dbReference type="RefSeq" id="WP_012692906.1">
    <property type="nucleotide sequence ID" value="NC_012526.1"/>
</dbReference>
<dbReference type="SMR" id="C1D1Q9"/>
<dbReference type="STRING" id="546414.Deide_09052"/>
<dbReference type="PaxDb" id="546414-Deide_09052"/>
<dbReference type="KEGG" id="ddr:Deide_09052"/>
<dbReference type="eggNOG" id="COG0037">
    <property type="taxonomic scope" value="Bacteria"/>
</dbReference>
<dbReference type="eggNOG" id="COG0590">
    <property type="taxonomic scope" value="Bacteria"/>
</dbReference>
<dbReference type="HOGENOM" id="CLU_018869_0_1_0"/>
<dbReference type="OrthoDB" id="9807403at2"/>
<dbReference type="Proteomes" id="UP000002208">
    <property type="component" value="Chromosome"/>
</dbReference>
<dbReference type="GO" id="GO:0005737">
    <property type="term" value="C:cytoplasm"/>
    <property type="evidence" value="ECO:0007669"/>
    <property type="project" value="UniProtKB-SubCell"/>
</dbReference>
<dbReference type="GO" id="GO:0005524">
    <property type="term" value="F:ATP binding"/>
    <property type="evidence" value="ECO:0007669"/>
    <property type="project" value="UniProtKB-UniRule"/>
</dbReference>
<dbReference type="GO" id="GO:0032267">
    <property type="term" value="F:tRNA(Ile)-lysidine synthase activity"/>
    <property type="evidence" value="ECO:0007669"/>
    <property type="project" value="UniProtKB-EC"/>
</dbReference>
<dbReference type="GO" id="GO:0052717">
    <property type="term" value="F:tRNA-specific adenosine-34 deaminase activity"/>
    <property type="evidence" value="ECO:0007669"/>
    <property type="project" value="UniProtKB-UniRule"/>
</dbReference>
<dbReference type="GO" id="GO:0008270">
    <property type="term" value="F:zinc ion binding"/>
    <property type="evidence" value="ECO:0007669"/>
    <property type="project" value="UniProtKB-UniRule"/>
</dbReference>
<dbReference type="GO" id="GO:0002100">
    <property type="term" value="P:tRNA wobble adenosine to inosine editing"/>
    <property type="evidence" value="ECO:0007669"/>
    <property type="project" value="UniProtKB-UniRule"/>
</dbReference>
<dbReference type="CDD" id="cd01285">
    <property type="entry name" value="nucleoside_deaminase"/>
    <property type="match status" value="1"/>
</dbReference>
<dbReference type="CDD" id="cd01992">
    <property type="entry name" value="TilS_N"/>
    <property type="match status" value="1"/>
</dbReference>
<dbReference type="Gene3D" id="3.40.140.10">
    <property type="entry name" value="Cytidine Deaminase, domain 2"/>
    <property type="match status" value="1"/>
</dbReference>
<dbReference type="Gene3D" id="3.40.50.620">
    <property type="entry name" value="HUPs"/>
    <property type="match status" value="1"/>
</dbReference>
<dbReference type="HAMAP" id="MF_00972">
    <property type="entry name" value="tRNA_aden_deaminase"/>
    <property type="match status" value="1"/>
</dbReference>
<dbReference type="HAMAP" id="MF_01161">
    <property type="entry name" value="tRNA_Ile_lys_synt"/>
    <property type="match status" value="1"/>
</dbReference>
<dbReference type="InterPro" id="IPR002125">
    <property type="entry name" value="CMP_dCMP_dom"/>
</dbReference>
<dbReference type="InterPro" id="IPR016193">
    <property type="entry name" value="Cytidine_deaminase-like"/>
</dbReference>
<dbReference type="InterPro" id="IPR012796">
    <property type="entry name" value="Lysidine-tRNA-synth_C"/>
</dbReference>
<dbReference type="InterPro" id="IPR014729">
    <property type="entry name" value="Rossmann-like_a/b/a_fold"/>
</dbReference>
<dbReference type="InterPro" id="IPR011063">
    <property type="entry name" value="TilS/TtcA_N"/>
</dbReference>
<dbReference type="InterPro" id="IPR028883">
    <property type="entry name" value="tRNA_aden_deaminase"/>
</dbReference>
<dbReference type="InterPro" id="IPR012094">
    <property type="entry name" value="tRNA_Ile_lys_synt"/>
</dbReference>
<dbReference type="InterPro" id="IPR012795">
    <property type="entry name" value="tRNA_Ile_lys_synt_N"/>
</dbReference>
<dbReference type="NCBIfam" id="TIGR02433">
    <property type="entry name" value="lysidine_TilS_C"/>
    <property type="match status" value="1"/>
</dbReference>
<dbReference type="NCBIfam" id="TIGR02432">
    <property type="entry name" value="lysidine_TilS_N"/>
    <property type="match status" value="1"/>
</dbReference>
<dbReference type="PANTHER" id="PTHR43033">
    <property type="entry name" value="TRNA(ILE)-LYSIDINE SYNTHASE-RELATED"/>
    <property type="match status" value="1"/>
</dbReference>
<dbReference type="PANTHER" id="PTHR43033:SF1">
    <property type="entry name" value="TRNA(ILE)-LYSIDINE SYNTHASE-RELATED"/>
    <property type="match status" value="1"/>
</dbReference>
<dbReference type="Pfam" id="PF01171">
    <property type="entry name" value="ATP_bind_3"/>
    <property type="match status" value="1"/>
</dbReference>
<dbReference type="Pfam" id="PF14437">
    <property type="entry name" value="MafB19-deam"/>
    <property type="match status" value="1"/>
</dbReference>
<dbReference type="Pfam" id="PF11734">
    <property type="entry name" value="TilS_C"/>
    <property type="match status" value="1"/>
</dbReference>
<dbReference type="SMART" id="SM00977">
    <property type="entry name" value="TilS_C"/>
    <property type="match status" value="1"/>
</dbReference>
<dbReference type="SUPFAM" id="SSF52402">
    <property type="entry name" value="Adenine nucleotide alpha hydrolases-like"/>
    <property type="match status" value="1"/>
</dbReference>
<dbReference type="SUPFAM" id="SSF53927">
    <property type="entry name" value="Cytidine deaminase-like"/>
    <property type="match status" value="1"/>
</dbReference>
<dbReference type="SUPFAM" id="SSF56037">
    <property type="entry name" value="PheT/TilS domain"/>
    <property type="match status" value="1"/>
</dbReference>
<dbReference type="PROSITE" id="PS51747">
    <property type="entry name" value="CYT_DCMP_DEAMINASES_2"/>
    <property type="match status" value="1"/>
</dbReference>
<sequence>MSTLLAPLHPYAGRVVVVGVSGGADSVALLRALVQAEARPVVAHLDHALRPNSAEDAQWVHDLAEQLGAAHTSTRVDVAAVAARRGWNVEDAARRVRYEVLSRAARQHGAHTVMTAHTRRDQAETVLMGLLRGEAVLTGIPAVRGRVRRPWLDVPRSEIEAYLKALGQEWREDPTNADVTYTRAWLRTEVMPVLAARFPGVEAALGRVAKLAQQDDEALRDLAAALTPHAPRDRVPLAVLRRRVTQELKSAGLQFHVGQVDQLAEAQRTGETRHVTLLGGRGVTVTGGALHLAARAWPLPSFSWPEDWTLRTRQPGDRITLPGGTRKVSDVLTDLKIPRDQRDDVPLLVSAQGVKWIGVEPNIWAKGARAVVGQPADLLDTAMGEALGLAREAALAQEVPVGAVVLGPGGRIIGSGRNTSRADSDMTRHAELAALRAATAELGTAYLTGCTLVVTLEPCPMCLGAALEARVERIVYGASNPKAGALGGVSDLLSSHWGHVPAVTGGVRAQDAARVLRDSFQELRQRRLKSPDV</sequence>
<feature type="chain" id="PRO_1000213710" description="tRNA(Ile)-lysidine synthase">
    <location>
        <begin position="1"/>
        <end position="533"/>
    </location>
</feature>
<feature type="domain" description="CMP/dCMP-type deaminase" evidence="2">
    <location>
        <begin position="377"/>
        <end position="500"/>
    </location>
</feature>
<feature type="binding site" evidence="1">
    <location>
        <begin position="21"/>
        <end position="26"/>
    </location>
    <ligand>
        <name>ATP</name>
        <dbReference type="ChEBI" id="CHEBI:30616"/>
    </ligand>
</feature>
<name>TILS_DEIDV</name>
<evidence type="ECO:0000255" key="1">
    <source>
        <dbReference type="HAMAP-Rule" id="MF_01161"/>
    </source>
</evidence>
<evidence type="ECO:0000255" key="2">
    <source>
        <dbReference type="PROSITE-ProRule" id="PRU01083"/>
    </source>
</evidence>
<protein>
    <recommendedName>
        <fullName evidence="1">tRNA(Ile)-lysidine synthase</fullName>
        <ecNumber evidence="1">6.3.4.19</ecNumber>
    </recommendedName>
    <alternativeName>
        <fullName evidence="1">tRNA(Ile)-2-lysyl-cytidine synthase</fullName>
    </alternativeName>
    <alternativeName>
        <fullName evidence="1">tRNA(Ile)-lysidine synthetase</fullName>
    </alternativeName>
</protein>
<gene>
    <name evidence="1" type="primary">tilS</name>
    <name type="ordered locus">Deide_09052</name>
</gene>
<keyword id="KW-0067">ATP-binding</keyword>
<keyword id="KW-0963">Cytoplasm</keyword>
<keyword id="KW-0436">Ligase</keyword>
<keyword id="KW-0547">Nucleotide-binding</keyword>
<keyword id="KW-1185">Reference proteome</keyword>
<keyword id="KW-0819">tRNA processing</keyword>
<proteinExistence type="inferred from homology"/>
<accession>C1D1Q9</accession>
<reference key="1">
    <citation type="journal article" date="2009" name="PLoS Genet.">
        <title>Alliance of proteomics and genomics to unravel the specificities of Sahara bacterium Deinococcus deserti.</title>
        <authorList>
            <person name="de Groot A."/>
            <person name="Dulermo R."/>
            <person name="Ortet P."/>
            <person name="Blanchard L."/>
            <person name="Guerin P."/>
            <person name="Fernandez B."/>
            <person name="Vacherie B."/>
            <person name="Dossat C."/>
            <person name="Jolivet E."/>
            <person name="Siguier P."/>
            <person name="Chandler M."/>
            <person name="Barakat M."/>
            <person name="Dedieu A."/>
            <person name="Barbe V."/>
            <person name="Heulin T."/>
            <person name="Sommer S."/>
            <person name="Achouak W."/>
            <person name="Armengaud J."/>
        </authorList>
    </citation>
    <scope>NUCLEOTIDE SEQUENCE [LARGE SCALE GENOMIC DNA]</scope>
    <source>
        <strain>DSM 17065 / CIP 109153 / LMG 22923 / VCD115</strain>
    </source>
</reference>
<organism>
    <name type="scientific">Deinococcus deserti (strain DSM 17065 / CIP 109153 / LMG 22923 / VCD115)</name>
    <dbReference type="NCBI Taxonomy" id="546414"/>
    <lineage>
        <taxon>Bacteria</taxon>
        <taxon>Thermotogati</taxon>
        <taxon>Deinococcota</taxon>
        <taxon>Deinococci</taxon>
        <taxon>Deinococcales</taxon>
        <taxon>Deinococcaceae</taxon>
        <taxon>Deinococcus</taxon>
    </lineage>
</organism>
<comment type="function">
    <text evidence="1">Ligates lysine onto the cytidine present at position 34 of the AUA codon-specific tRNA(Ile) that contains the anticodon CAU, in an ATP-dependent manner. Cytidine is converted to lysidine, thus changing the amino acid specificity of the tRNA from methionine to isoleucine.</text>
</comment>
<comment type="catalytic activity">
    <reaction evidence="1">
        <text>cytidine(34) in tRNA(Ile2) + L-lysine + ATP = lysidine(34) in tRNA(Ile2) + AMP + diphosphate + H(+)</text>
        <dbReference type="Rhea" id="RHEA:43744"/>
        <dbReference type="Rhea" id="RHEA-COMP:10625"/>
        <dbReference type="Rhea" id="RHEA-COMP:10670"/>
        <dbReference type="ChEBI" id="CHEBI:15378"/>
        <dbReference type="ChEBI" id="CHEBI:30616"/>
        <dbReference type="ChEBI" id="CHEBI:32551"/>
        <dbReference type="ChEBI" id="CHEBI:33019"/>
        <dbReference type="ChEBI" id="CHEBI:82748"/>
        <dbReference type="ChEBI" id="CHEBI:83665"/>
        <dbReference type="ChEBI" id="CHEBI:456215"/>
        <dbReference type="EC" id="6.3.4.19"/>
    </reaction>
</comment>
<comment type="subcellular location">
    <subcellularLocation>
        <location evidence="1">Cytoplasm</location>
    </subcellularLocation>
</comment>
<comment type="domain">
    <text>The N-terminal region contains the highly conserved SGGXDS motif, predicted to be a P-loop motif involved in ATP binding.</text>
</comment>
<comment type="similarity">
    <text evidence="1">Belongs to the tRNA(Ile)-lysidine synthase family.</text>
</comment>